<protein>
    <recommendedName>
        <fullName evidence="1">Probable GTP-binding protein EngB</fullName>
    </recommendedName>
</protein>
<accession>Q1QE34</accession>
<comment type="function">
    <text evidence="1">Necessary for normal cell division and for the maintenance of normal septation.</text>
</comment>
<comment type="cofactor">
    <cofactor evidence="1">
        <name>Mg(2+)</name>
        <dbReference type="ChEBI" id="CHEBI:18420"/>
    </cofactor>
</comment>
<comment type="similarity">
    <text evidence="1">Belongs to the TRAFAC class TrmE-Era-EngA-EngB-Septin-like GTPase superfamily. EngB GTPase family.</text>
</comment>
<comment type="sequence caution" evidence="2">
    <conflict type="erroneous initiation">
        <sequence resource="EMBL-CDS" id="ABE74069"/>
    </conflict>
</comment>
<feature type="chain" id="PRO_0000266923" description="Probable GTP-binding protein EngB">
    <location>
        <begin position="1"/>
        <end position="227"/>
    </location>
</feature>
<feature type="domain" description="EngB-type G" evidence="1">
    <location>
        <begin position="13"/>
        <end position="188"/>
    </location>
</feature>
<feature type="binding site" evidence="1">
    <location>
        <begin position="21"/>
        <end position="28"/>
    </location>
    <ligand>
        <name>GTP</name>
        <dbReference type="ChEBI" id="CHEBI:37565"/>
    </ligand>
</feature>
<feature type="binding site" evidence="1">
    <location>
        <position position="28"/>
    </location>
    <ligand>
        <name>Mg(2+)</name>
        <dbReference type="ChEBI" id="CHEBI:18420"/>
    </ligand>
</feature>
<feature type="binding site" evidence="1">
    <location>
        <begin position="48"/>
        <end position="52"/>
    </location>
    <ligand>
        <name>GTP</name>
        <dbReference type="ChEBI" id="CHEBI:37565"/>
    </ligand>
</feature>
<feature type="binding site" evidence="1">
    <location>
        <position position="50"/>
    </location>
    <ligand>
        <name>Mg(2+)</name>
        <dbReference type="ChEBI" id="CHEBI:18420"/>
    </ligand>
</feature>
<feature type="binding site" evidence="1">
    <location>
        <begin position="67"/>
        <end position="70"/>
    </location>
    <ligand>
        <name>GTP</name>
        <dbReference type="ChEBI" id="CHEBI:37565"/>
    </ligand>
</feature>
<feature type="binding site" evidence="1">
    <location>
        <begin position="134"/>
        <end position="137"/>
    </location>
    <ligand>
        <name>GTP</name>
        <dbReference type="ChEBI" id="CHEBI:37565"/>
    </ligand>
</feature>
<feature type="binding site" evidence="1">
    <location>
        <begin position="167"/>
        <end position="169"/>
    </location>
    <ligand>
        <name>GTP</name>
        <dbReference type="ChEBI" id="CHEBI:37565"/>
    </ligand>
</feature>
<sequence>MSAPTFRLCPADIGLEVAFAGRSNAGKSSAINALTNQRQLARSSKTPGRTQMINFFNVGDADRRLVDLPGYGYAAVPLEMKKEWQVELEEYLVSRSSLAGLVLMSDIRHPLKFFDEQMLRWAKDGELPVHILLTKADKLKYGASKNALLNTRKRLKELGLNCSIQLFSALRKEGLDELAGVMGNWYEYQLDADKIIESSFALLEGDELEDAIEQDALQKDSSQQDSK</sequence>
<evidence type="ECO:0000255" key="1">
    <source>
        <dbReference type="HAMAP-Rule" id="MF_00321"/>
    </source>
</evidence>
<evidence type="ECO:0000305" key="2"/>
<name>ENGB_PSYCK</name>
<organism>
    <name type="scientific">Psychrobacter cryohalolentis (strain ATCC BAA-1226 / DSM 17306 / VKM B-2378 / K5)</name>
    <dbReference type="NCBI Taxonomy" id="335284"/>
    <lineage>
        <taxon>Bacteria</taxon>
        <taxon>Pseudomonadati</taxon>
        <taxon>Pseudomonadota</taxon>
        <taxon>Gammaproteobacteria</taxon>
        <taxon>Moraxellales</taxon>
        <taxon>Moraxellaceae</taxon>
        <taxon>Psychrobacter</taxon>
    </lineage>
</organism>
<keyword id="KW-0131">Cell cycle</keyword>
<keyword id="KW-0132">Cell division</keyword>
<keyword id="KW-0342">GTP-binding</keyword>
<keyword id="KW-0460">Magnesium</keyword>
<keyword id="KW-0479">Metal-binding</keyword>
<keyword id="KW-0547">Nucleotide-binding</keyword>
<keyword id="KW-0717">Septation</keyword>
<proteinExistence type="inferred from homology"/>
<gene>
    <name evidence="1" type="primary">engB</name>
    <name type="ordered locus">Pcryo_0285</name>
</gene>
<dbReference type="EMBL" id="CP000323">
    <property type="protein sequence ID" value="ABE74069.1"/>
    <property type="status" value="ALT_INIT"/>
    <property type="molecule type" value="Genomic_DNA"/>
</dbReference>
<dbReference type="SMR" id="Q1QE34"/>
<dbReference type="STRING" id="335284.Pcryo_0285"/>
<dbReference type="KEGG" id="pcr:Pcryo_0285"/>
<dbReference type="eggNOG" id="COG0218">
    <property type="taxonomic scope" value="Bacteria"/>
</dbReference>
<dbReference type="HOGENOM" id="CLU_033732_1_0_6"/>
<dbReference type="Proteomes" id="UP000002425">
    <property type="component" value="Chromosome"/>
</dbReference>
<dbReference type="GO" id="GO:0005829">
    <property type="term" value="C:cytosol"/>
    <property type="evidence" value="ECO:0007669"/>
    <property type="project" value="TreeGrafter"/>
</dbReference>
<dbReference type="GO" id="GO:0005525">
    <property type="term" value="F:GTP binding"/>
    <property type="evidence" value="ECO:0007669"/>
    <property type="project" value="UniProtKB-UniRule"/>
</dbReference>
<dbReference type="GO" id="GO:0046872">
    <property type="term" value="F:metal ion binding"/>
    <property type="evidence" value="ECO:0007669"/>
    <property type="project" value="UniProtKB-KW"/>
</dbReference>
<dbReference type="GO" id="GO:0000917">
    <property type="term" value="P:division septum assembly"/>
    <property type="evidence" value="ECO:0007669"/>
    <property type="project" value="UniProtKB-KW"/>
</dbReference>
<dbReference type="CDD" id="cd01876">
    <property type="entry name" value="YihA_EngB"/>
    <property type="match status" value="1"/>
</dbReference>
<dbReference type="FunFam" id="3.40.50.300:FF:000098">
    <property type="entry name" value="Probable GTP-binding protein EngB"/>
    <property type="match status" value="1"/>
</dbReference>
<dbReference type="Gene3D" id="3.40.50.300">
    <property type="entry name" value="P-loop containing nucleotide triphosphate hydrolases"/>
    <property type="match status" value="1"/>
</dbReference>
<dbReference type="HAMAP" id="MF_00321">
    <property type="entry name" value="GTPase_EngB"/>
    <property type="match status" value="1"/>
</dbReference>
<dbReference type="InterPro" id="IPR030393">
    <property type="entry name" value="G_ENGB_dom"/>
</dbReference>
<dbReference type="InterPro" id="IPR006073">
    <property type="entry name" value="GTP-bd"/>
</dbReference>
<dbReference type="InterPro" id="IPR019987">
    <property type="entry name" value="GTP-bd_ribosome_bio_YsxC"/>
</dbReference>
<dbReference type="InterPro" id="IPR027417">
    <property type="entry name" value="P-loop_NTPase"/>
</dbReference>
<dbReference type="NCBIfam" id="TIGR03598">
    <property type="entry name" value="GTPase_YsxC"/>
    <property type="match status" value="1"/>
</dbReference>
<dbReference type="PANTHER" id="PTHR11649:SF13">
    <property type="entry name" value="ENGB-TYPE G DOMAIN-CONTAINING PROTEIN"/>
    <property type="match status" value="1"/>
</dbReference>
<dbReference type="PANTHER" id="PTHR11649">
    <property type="entry name" value="MSS1/TRME-RELATED GTP-BINDING PROTEIN"/>
    <property type="match status" value="1"/>
</dbReference>
<dbReference type="Pfam" id="PF01926">
    <property type="entry name" value="MMR_HSR1"/>
    <property type="match status" value="1"/>
</dbReference>
<dbReference type="SUPFAM" id="SSF52540">
    <property type="entry name" value="P-loop containing nucleoside triphosphate hydrolases"/>
    <property type="match status" value="1"/>
</dbReference>
<dbReference type="PROSITE" id="PS51706">
    <property type="entry name" value="G_ENGB"/>
    <property type="match status" value="1"/>
</dbReference>
<reference key="1">
    <citation type="submission" date="2006-03" db="EMBL/GenBank/DDBJ databases">
        <title>Complete sequence of chromosome of Psychrobacter cryohalolentis K5.</title>
        <authorList>
            <consortium name="US DOE Joint Genome Institute"/>
            <person name="Copeland A."/>
            <person name="Lucas S."/>
            <person name="Lapidus A."/>
            <person name="Barry K."/>
            <person name="Detter J.C."/>
            <person name="Glavina T."/>
            <person name="Hammon N."/>
            <person name="Israni S."/>
            <person name="Dalin E."/>
            <person name="Tice H."/>
            <person name="Pitluck S."/>
            <person name="Brettin T."/>
            <person name="Bruce D."/>
            <person name="Han C."/>
            <person name="Tapia R."/>
            <person name="Sims D.R."/>
            <person name="Gilna P."/>
            <person name="Schmutz J."/>
            <person name="Larimer F."/>
            <person name="Land M."/>
            <person name="Hauser L."/>
            <person name="Kyrpides N."/>
            <person name="Kim E."/>
            <person name="Richardson P."/>
        </authorList>
    </citation>
    <scope>NUCLEOTIDE SEQUENCE [LARGE SCALE GENOMIC DNA]</scope>
    <source>
        <strain>ATCC BAA-1226 / DSM 17306 / VKM B-2378 / K5</strain>
    </source>
</reference>